<gene>
    <name evidence="1" type="primary">aroB</name>
    <name type="ordered locus">SAV1465</name>
</gene>
<accession>P63617</accession>
<accession>Q99U24</accession>
<comment type="function">
    <text evidence="1">Catalyzes the conversion of 3-deoxy-D-arabino-heptulosonate 7-phosphate (DAHP) to dehydroquinate (DHQ).</text>
</comment>
<comment type="catalytic activity">
    <reaction evidence="1">
        <text>7-phospho-2-dehydro-3-deoxy-D-arabino-heptonate = 3-dehydroquinate + phosphate</text>
        <dbReference type="Rhea" id="RHEA:21968"/>
        <dbReference type="ChEBI" id="CHEBI:32364"/>
        <dbReference type="ChEBI" id="CHEBI:43474"/>
        <dbReference type="ChEBI" id="CHEBI:58394"/>
        <dbReference type="EC" id="4.2.3.4"/>
    </reaction>
</comment>
<comment type="cofactor">
    <cofactor evidence="1">
        <name>NAD(+)</name>
        <dbReference type="ChEBI" id="CHEBI:57540"/>
    </cofactor>
</comment>
<comment type="cofactor">
    <cofactor evidence="1">
        <name>Co(2+)</name>
        <dbReference type="ChEBI" id="CHEBI:48828"/>
    </cofactor>
    <cofactor evidence="1">
        <name>Zn(2+)</name>
        <dbReference type="ChEBI" id="CHEBI:29105"/>
    </cofactor>
    <text evidence="1">Binds 1 divalent metal cation per subunit. Can use either Co(2+) or Zn(2+).</text>
</comment>
<comment type="pathway">
    <text evidence="1">Metabolic intermediate biosynthesis; chorismate biosynthesis; chorismate from D-erythrose 4-phosphate and phosphoenolpyruvate: step 2/7.</text>
</comment>
<comment type="subcellular location">
    <subcellularLocation>
        <location evidence="1">Cytoplasm</location>
    </subcellularLocation>
</comment>
<comment type="similarity">
    <text evidence="1">Belongs to the sugar phosphate cyclases superfamily. Dehydroquinate synthase family.</text>
</comment>
<name>AROB_STAAM</name>
<feature type="chain" id="PRO_0000140780" description="3-dehydroquinate synthase">
    <location>
        <begin position="1"/>
        <end position="354"/>
    </location>
</feature>
<feature type="binding site" evidence="1">
    <location>
        <begin position="100"/>
        <end position="104"/>
    </location>
    <ligand>
        <name>NAD(+)</name>
        <dbReference type="ChEBI" id="CHEBI:57540"/>
    </ligand>
</feature>
<feature type="binding site" evidence="1">
    <location>
        <begin position="124"/>
        <end position="125"/>
    </location>
    <ligand>
        <name>NAD(+)</name>
        <dbReference type="ChEBI" id="CHEBI:57540"/>
    </ligand>
</feature>
<feature type="binding site" evidence="1">
    <location>
        <position position="136"/>
    </location>
    <ligand>
        <name>NAD(+)</name>
        <dbReference type="ChEBI" id="CHEBI:57540"/>
    </ligand>
</feature>
<feature type="binding site" evidence="1">
    <location>
        <position position="145"/>
    </location>
    <ligand>
        <name>NAD(+)</name>
        <dbReference type="ChEBI" id="CHEBI:57540"/>
    </ligand>
</feature>
<feature type="binding site" evidence="1">
    <location>
        <begin position="163"/>
        <end position="166"/>
    </location>
    <ligand>
        <name>NAD(+)</name>
        <dbReference type="ChEBI" id="CHEBI:57540"/>
    </ligand>
</feature>
<feature type="binding site" evidence="1">
    <location>
        <position position="178"/>
    </location>
    <ligand>
        <name>Zn(2+)</name>
        <dbReference type="ChEBI" id="CHEBI:29105"/>
    </ligand>
</feature>
<feature type="binding site" evidence="1">
    <location>
        <position position="242"/>
    </location>
    <ligand>
        <name>Zn(2+)</name>
        <dbReference type="ChEBI" id="CHEBI:29105"/>
    </ligand>
</feature>
<feature type="binding site" evidence="1">
    <location>
        <position position="256"/>
    </location>
    <ligand>
        <name>Zn(2+)</name>
        <dbReference type="ChEBI" id="CHEBI:29105"/>
    </ligand>
</feature>
<dbReference type="EC" id="4.2.3.4" evidence="1"/>
<dbReference type="EMBL" id="BA000017">
    <property type="protein sequence ID" value="BAB57627.1"/>
    <property type="molecule type" value="Genomic_DNA"/>
</dbReference>
<dbReference type="RefSeq" id="WP_000776312.1">
    <property type="nucleotide sequence ID" value="NC_002758.2"/>
</dbReference>
<dbReference type="SMR" id="P63617"/>
<dbReference type="KEGG" id="sav:SAV1465"/>
<dbReference type="HOGENOM" id="CLU_001201_0_1_9"/>
<dbReference type="PhylomeDB" id="P63617"/>
<dbReference type="UniPathway" id="UPA00053">
    <property type="reaction ID" value="UER00085"/>
</dbReference>
<dbReference type="Proteomes" id="UP000002481">
    <property type="component" value="Chromosome"/>
</dbReference>
<dbReference type="GO" id="GO:0005737">
    <property type="term" value="C:cytoplasm"/>
    <property type="evidence" value="ECO:0007669"/>
    <property type="project" value="UniProtKB-SubCell"/>
</dbReference>
<dbReference type="GO" id="GO:0003856">
    <property type="term" value="F:3-dehydroquinate synthase activity"/>
    <property type="evidence" value="ECO:0007669"/>
    <property type="project" value="UniProtKB-UniRule"/>
</dbReference>
<dbReference type="GO" id="GO:0046872">
    <property type="term" value="F:metal ion binding"/>
    <property type="evidence" value="ECO:0007669"/>
    <property type="project" value="UniProtKB-KW"/>
</dbReference>
<dbReference type="GO" id="GO:0000166">
    <property type="term" value="F:nucleotide binding"/>
    <property type="evidence" value="ECO:0007669"/>
    <property type="project" value="UniProtKB-KW"/>
</dbReference>
<dbReference type="GO" id="GO:0008652">
    <property type="term" value="P:amino acid biosynthetic process"/>
    <property type="evidence" value="ECO:0007669"/>
    <property type="project" value="UniProtKB-KW"/>
</dbReference>
<dbReference type="GO" id="GO:0009073">
    <property type="term" value="P:aromatic amino acid family biosynthetic process"/>
    <property type="evidence" value="ECO:0007669"/>
    <property type="project" value="UniProtKB-KW"/>
</dbReference>
<dbReference type="GO" id="GO:0009423">
    <property type="term" value="P:chorismate biosynthetic process"/>
    <property type="evidence" value="ECO:0007669"/>
    <property type="project" value="UniProtKB-UniRule"/>
</dbReference>
<dbReference type="FunFam" id="3.40.50.1970:FF:000019">
    <property type="entry name" value="3-dehydroquinate synthase"/>
    <property type="match status" value="1"/>
</dbReference>
<dbReference type="Gene3D" id="3.40.50.1970">
    <property type="match status" value="1"/>
</dbReference>
<dbReference type="Gene3D" id="1.20.1090.10">
    <property type="entry name" value="Dehydroquinate synthase-like - alpha domain"/>
    <property type="match status" value="1"/>
</dbReference>
<dbReference type="HAMAP" id="MF_00110">
    <property type="entry name" value="DHQ_synthase"/>
    <property type="match status" value="1"/>
</dbReference>
<dbReference type="InterPro" id="IPR050071">
    <property type="entry name" value="Dehydroquinate_synthase"/>
</dbReference>
<dbReference type="InterPro" id="IPR016037">
    <property type="entry name" value="DHQ_synth_AroB"/>
</dbReference>
<dbReference type="InterPro" id="IPR030963">
    <property type="entry name" value="DHQ_synth_fam"/>
</dbReference>
<dbReference type="InterPro" id="IPR030960">
    <property type="entry name" value="DHQS/DOIS_N"/>
</dbReference>
<dbReference type="InterPro" id="IPR056179">
    <property type="entry name" value="DHQS_C"/>
</dbReference>
<dbReference type="NCBIfam" id="TIGR01357">
    <property type="entry name" value="aroB"/>
    <property type="match status" value="1"/>
</dbReference>
<dbReference type="PANTHER" id="PTHR43622">
    <property type="entry name" value="3-DEHYDROQUINATE SYNTHASE"/>
    <property type="match status" value="1"/>
</dbReference>
<dbReference type="PANTHER" id="PTHR43622:SF7">
    <property type="entry name" value="3-DEHYDROQUINATE SYNTHASE, CHLOROPLASTIC"/>
    <property type="match status" value="1"/>
</dbReference>
<dbReference type="Pfam" id="PF01761">
    <property type="entry name" value="DHQ_synthase"/>
    <property type="match status" value="1"/>
</dbReference>
<dbReference type="Pfam" id="PF24621">
    <property type="entry name" value="DHQS_C"/>
    <property type="match status" value="1"/>
</dbReference>
<dbReference type="PIRSF" id="PIRSF001455">
    <property type="entry name" value="DHQ_synth"/>
    <property type="match status" value="1"/>
</dbReference>
<dbReference type="SUPFAM" id="SSF56796">
    <property type="entry name" value="Dehydroquinate synthase-like"/>
    <property type="match status" value="1"/>
</dbReference>
<keyword id="KW-0028">Amino-acid biosynthesis</keyword>
<keyword id="KW-0057">Aromatic amino acid biosynthesis</keyword>
<keyword id="KW-0170">Cobalt</keyword>
<keyword id="KW-0963">Cytoplasm</keyword>
<keyword id="KW-0456">Lyase</keyword>
<keyword id="KW-0479">Metal-binding</keyword>
<keyword id="KW-0520">NAD</keyword>
<keyword id="KW-0547">Nucleotide-binding</keyword>
<keyword id="KW-0862">Zinc</keyword>
<reference key="1">
    <citation type="journal article" date="2001" name="Lancet">
        <title>Whole genome sequencing of meticillin-resistant Staphylococcus aureus.</title>
        <authorList>
            <person name="Kuroda M."/>
            <person name="Ohta T."/>
            <person name="Uchiyama I."/>
            <person name="Baba T."/>
            <person name="Yuzawa H."/>
            <person name="Kobayashi I."/>
            <person name="Cui L."/>
            <person name="Oguchi A."/>
            <person name="Aoki K."/>
            <person name="Nagai Y."/>
            <person name="Lian J.-Q."/>
            <person name="Ito T."/>
            <person name="Kanamori M."/>
            <person name="Matsumaru H."/>
            <person name="Maruyama A."/>
            <person name="Murakami H."/>
            <person name="Hosoyama A."/>
            <person name="Mizutani-Ui Y."/>
            <person name="Takahashi N.K."/>
            <person name="Sawano T."/>
            <person name="Inoue R."/>
            <person name="Kaito C."/>
            <person name="Sekimizu K."/>
            <person name="Hirakawa H."/>
            <person name="Kuhara S."/>
            <person name="Goto S."/>
            <person name="Yabuzaki J."/>
            <person name="Kanehisa M."/>
            <person name="Yamashita A."/>
            <person name="Oshima K."/>
            <person name="Furuya K."/>
            <person name="Yoshino C."/>
            <person name="Shiba T."/>
            <person name="Hattori M."/>
            <person name="Ogasawara N."/>
            <person name="Hayashi H."/>
            <person name="Hiramatsu K."/>
        </authorList>
    </citation>
    <scope>NUCLEOTIDE SEQUENCE [LARGE SCALE GENOMIC DNA]</scope>
    <source>
        <strain>Mu50 / ATCC 700699</strain>
    </source>
</reference>
<proteinExistence type="inferred from homology"/>
<protein>
    <recommendedName>
        <fullName evidence="1">3-dehydroquinate synthase</fullName>
        <shortName evidence="1">DHQS</shortName>
        <ecNumber evidence="1">4.2.3.4</ecNumber>
    </recommendedName>
</protein>
<sequence length="354" mass="40237">MKLQTTYPSNNYPIFVEHGAIDHISTYIDQFDQSFILIDEHVNQYFADKFDDILSYENVHKVIIPAGEKTKTFEQYQETLEYILSHHVTRNTAIIAVGGGATGDFAGFVAATLLRGVHFIQVPTTILAHDSSVGGKVGINSKQGKNLIGAFYRPTAVIYDLDFLKTLPFEQILSGYAEVYKHALLNGESTTQEIEQHFKDREILQSLNGMDKYIAKGIETKLDIVVADEKEQGVRKFLNLGHTFGHAVEYNHKIAHGHAVMIGIIYQFIVANILFNSNHDIQHYINYLTKLGYPLETITDIDFETIYQYMLSDKKNDKQGVQMVLIKHFGDIVVQHIDQTTLQHACEQLKTYFK</sequence>
<organism>
    <name type="scientific">Staphylococcus aureus (strain Mu50 / ATCC 700699)</name>
    <dbReference type="NCBI Taxonomy" id="158878"/>
    <lineage>
        <taxon>Bacteria</taxon>
        <taxon>Bacillati</taxon>
        <taxon>Bacillota</taxon>
        <taxon>Bacilli</taxon>
        <taxon>Bacillales</taxon>
        <taxon>Staphylococcaceae</taxon>
        <taxon>Staphylococcus</taxon>
    </lineage>
</organism>
<evidence type="ECO:0000255" key="1">
    <source>
        <dbReference type="HAMAP-Rule" id="MF_00110"/>
    </source>
</evidence>